<accession>Q03034</accession>
<accession>D6VTF8</accession>
<name>FDC1_YEAST</name>
<keyword id="KW-0002">3D-structure</keyword>
<keyword id="KW-0963">Cytoplasm</keyword>
<keyword id="KW-0210">Decarboxylase</keyword>
<keyword id="KW-0285">Flavoprotein</keyword>
<keyword id="KW-0288">FMN</keyword>
<keyword id="KW-0456">Lyase</keyword>
<keyword id="KW-0464">Manganese</keyword>
<keyword id="KW-0479">Metal-binding</keyword>
<keyword id="KW-1185">Reference proteome</keyword>
<proteinExistence type="evidence at protein level"/>
<sequence length="503" mass="56164">MRKLNPALEFRDFIQVLKDEDDLIEITEEIDPNLEVGAIMRKAYESHLPAPLFKNLKGASKDLFSILGCPAGLRSKEKGDHGRIAHHLGLDPKTTIKEIIDYLLECKEKEPLPPITVPVSSAPCKTHILSEEKIHLQSLPTPYLHVSDGGKYLQTYGMWILQTPDKKWTNWSIARGMVVDDKHITGLVIKPQHIRQIADSWAAIGKANEIPFALCFGVPPAAILVSSMPIPEGVSESDYVGAILGESVPVVKCETNDLMVPATSEMVFEGTLSLTDTHLEGPFGEMHGYVFKSQGHPCPLYTVKAMSYRDNAILPVSNPGLCTDETHTLIGSLVATEAKELAIESGLPILDAFMPYEAQALWLILKVDLKGLQALKTTPEEFCKKVGDIYFRTKVGFIVHEIILVADDIDIFNFKEVIWAYVTRHTPVADQMAFDDVTSFPLAPFVSQSSRSKTMKGGKCVTNCIFRQQYERSFDYITCNFEKGYPKGLVDKVNENWKRYGYK</sequence>
<comment type="function">
    <text evidence="2 5 6">Catalyzes the reversible decarboxylation of aromatic carboxylic acids like ferulic acid, p-coumaric acid or cinnamic acid, producing the corresponding vinyl derivatives 4-vinylphenol, 4-vinylguaiacol, and styrene, respectively, which play the role of aroma metabolites (PubMed:20471595, PubMed:25647642). Not essential for ubiquinone synthesis (PubMed:20471595).</text>
</comment>
<comment type="catalytic activity">
    <reaction evidence="2 5 6 7 8">
        <text>(E)-4-coumarate + H(+) = 4-vinylphenol + CO2</text>
        <dbReference type="Rhea" id="RHEA:33227"/>
        <dbReference type="ChEBI" id="CHEBI:1883"/>
        <dbReference type="ChEBI" id="CHEBI:12876"/>
        <dbReference type="ChEBI" id="CHEBI:15378"/>
        <dbReference type="ChEBI" id="CHEBI:16526"/>
        <dbReference type="EC" id="4.1.1.102"/>
    </reaction>
</comment>
<comment type="catalytic activity">
    <reaction evidence="2 5 6 7 8">
        <text>(E)-cinnamate + H(+) = styrene + CO2</text>
        <dbReference type="Rhea" id="RHEA:46920"/>
        <dbReference type="ChEBI" id="CHEBI:15378"/>
        <dbReference type="ChEBI" id="CHEBI:15669"/>
        <dbReference type="ChEBI" id="CHEBI:16526"/>
        <dbReference type="ChEBI" id="CHEBI:27452"/>
        <dbReference type="EC" id="4.1.1.102"/>
    </reaction>
</comment>
<comment type="catalytic activity">
    <reaction evidence="2 5 6 7 8">
        <text>(E)-ferulate + H(+) = 2-methoxy-4-vinylphenol + CO2</text>
        <dbReference type="Rhea" id="RHEA:33807"/>
        <dbReference type="ChEBI" id="CHEBI:15378"/>
        <dbReference type="ChEBI" id="CHEBI:16526"/>
        <dbReference type="ChEBI" id="CHEBI:29749"/>
        <dbReference type="ChEBI" id="CHEBI:42438"/>
        <dbReference type="EC" id="4.1.1.102"/>
    </reaction>
</comment>
<comment type="cofactor">
    <cofactor evidence="2 8">
        <name>Mn(2+)</name>
        <dbReference type="ChEBI" id="CHEBI:29035"/>
    </cofactor>
</comment>
<comment type="cofactor">
    <cofactor evidence="2 8">
        <name>prenylated FMN</name>
        <dbReference type="ChEBI" id="CHEBI:87746"/>
    </cofactor>
    <text evidence="2 8">Binds 1 prenylated FMN per subunit.</text>
</comment>
<comment type="biophysicochemical properties">
    <kinetics>
        <KM evidence="6">180 uM for ferulic acid</KM>
        <KM evidence="7">0.79 mM for ferulic acid</KM>
        <KM evidence="6">110 uM for p-coumaric acid</KM>
        <KM evidence="7">0.92 mM for p-coumaric acid</KM>
        <KM evidence="6">180 uM for cinnamic acid</KM>
        <Vmax evidence="7">6.8 nmol/min/mg enzyme for ferulic acid</Vmax>
        <Vmax evidence="7">7.2 nmol/min/mg enzyme for p-coumaric acid</Vmax>
        <text evidence="6">kcat is 3.8 sec(-1) with ferulic acid as substrate, 1.5 sec(-1) with p-coumaric acid as substrate and 4.6 sec(-1) with cinnamic acid as substrate.</text>
    </kinetics>
    <phDependence>
        <text evidence="6">Optimum pH is 7-8.</text>
    </phDependence>
</comment>
<comment type="subunit">
    <text evidence="2 6 7">Homodimer (PubMed:25862228). May form higher order oligomers (PubMed:25647642).</text>
</comment>
<comment type="subcellular location">
    <subcellularLocation>
        <location evidence="2 3">Cytoplasm</location>
    </subcellularLocation>
</comment>
<comment type="mass spectrometry" mass="57898.0" method="Electrospray" evidence="6">
    <text>The measured mass includes the mass of an N-terminal hexahistidine tag, expressed in E.coli.</text>
</comment>
<comment type="miscellaneous">
    <text evidence="4">Present with 861 molecules/cell in log phase SD medium.</text>
</comment>
<comment type="similarity">
    <text evidence="2 10">Belongs to the UbiD family. UbiD-like/FDC subfamily.</text>
</comment>
<dbReference type="EC" id="4.1.1.102" evidence="2 5 6 7 8"/>
<dbReference type="EMBL" id="U43834">
    <property type="protein sequence ID" value="AAB64981.1"/>
    <property type="molecule type" value="Genomic_DNA"/>
</dbReference>
<dbReference type="EMBL" id="BK006938">
    <property type="protein sequence ID" value="DAA12368.1"/>
    <property type="molecule type" value="Genomic_DNA"/>
</dbReference>
<dbReference type="PIR" id="S62018">
    <property type="entry name" value="S62018"/>
</dbReference>
<dbReference type="RefSeq" id="NP_010828.1">
    <property type="nucleotide sequence ID" value="NM_001180847.1"/>
</dbReference>
<dbReference type="PDB" id="4S13">
    <property type="method" value="X-ray"/>
    <property type="resolution" value="2.35 A"/>
    <property type="chains" value="A/B/C/D/E/F/G/H=1-503"/>
</dbReference>
<dbReference type="PDB" id="4ZAC">
    <property type="method" value="X-ray"/>
    <property type="resolution" value="1.65 A"/>
    <property type="chains" value="A/B/C/D=1-503"/>
</dbReference>
<dbReference type="PDB" id="6EVE">
    <property type="method" value="X-ray"/>
    <property type="resolution" value="2.05 A"/>
    <property type="chains" value="A/B/C/D=1-503"/>
</dbReference>
<dbReference type="PDB" id="6EVF">
    <property type="method" value="X-ray"/>
    <property type="resolution" value="2.06 A"/>
    <property type="chains" value="A/B/C/D=1-503"/>
</dbReference>
<dbReference type="PDB" id="8Y64">
    <property type="method" value="X-ray"/>
    <property type="resolution" value="1.97 A"/>
    <property type="chains" value="A/B=1-503"/>
</dbReference>
<dbReference type="PDBsum" id="4S13"/>
<dbReference type="PDBsum" id="4ZAC"/>
<dbReference type="PDBsum" id="6EVE"/>
<dbReference type="PDBsum" id="6EVF"/>
<dbReference type="PDBsum" id="8Y64"/>
<dbReference type="SMR" id="Q03034"/>
<dbReference type="BioGRID" id="32586">
    <property type="interactions" value="54"/>
</dbReference>
<dbReference type="DIP" id="DIP-7852N"/>
<dbReference type="FunCoup" id="Q03034">
    <property type="interactions" value="27"/>
</dbReference>
<dbReference type="IntAct" id="Q03034">
    <property type="interactions" value="17"/>
</dbReference>
<dbReference type="STRING" id="4932.YDR539W"/>
<dbReference type="iPTMnet" id="Q03034"/>
<dbReference type="PaxDb" id="4932-YDR539W"/>
<dbReference type="PeptideAtlas" id="Q03034"/>
<dbReference type="EnsemblFungi" id="YDR539W_mRNA">
    <property type="protein sequence ID" value="YDR539W"/>
    <property type="gene ID" value="YDR539W"/>
</dbReference>
<dbReference type="GeneID" id="852152"/>
<dbReference type="KEGG" id="sce:YDR539W"/>
<dbReference type="AGR" id="SGD:S000002947"/>
<dbReference type="SGD" id="S000002947">
    <property type="gene designation" value="FDC1"/>
</dbReference>
<dbReference type="VEuPathDB" id="FungiDB:YDR539W"/>
<dbReference type="eggNOG" id="ENOG502QR5I">
    <property type="taxonomic scope" value="Eukaryota"/>
</dbReference>
<dbReference type="GeneTree" id="ENSGT00940000176404"/>
<dbReference type="HOGENOM" id="CLU_023348_0_0_1"/>
<dbReference type="InParanoid" id="Q03034"/>
<dbReference type="OMA" id="NPPWAEN"/>
<dbReference type="OrthoDB" id="4878259at2759"/>
<dbReference type="BioCyc" id="MetaCyc:G3O-30047-MONOMER"/>
<dbReference type="BioCyc" id="YEAST:G3O-30047-MONOMER"/>
<dbReference type="BRENDA" id="4.1.1.102">
    <property type="organism ID" value="984"/>
</dbReference>
<dbReference type="BioGRID-ORCS" id="852152">
    <property type="hits" value="1 hit in 10 CRISPR screens"/>
</dbReference>
<dbReference type="EvolutionaryTrace" id="Q03034"/>
<dbReference type="PRO" id="PR:Q03034"/>
<dbReference type="Proteomes" id="UP000002311">
    <property type="component" value="Chromosome IV"/>
</dbReference>
<dbReference type="RNAct" id="Q03034">
    <property type="molecule type" value="protein"/>
</dbReference>
<dbReference type="GO" id="GO:0005737">
    <property type="term" value="C:cytoplasm"/>
    <property type="evidence" value="ECO:0007005"/>
    <property type="project" value="SGD"/>
</dbReference>
<dbReference type="GO" id="GO:0016831">
    <property type="term" value="F:carboxy-lyase activity"/>
    <property type="evidence" value="ECO:0000314"/>
    <property type="project" value="SGD"/>
</dbReference>
<dbReference type="GO" id="GO:0046872">
    <property type="term" value="F:metal ion binding"/>
    <property type="evidence" value="ECO:0007669"/>
    <property type="project" value="UniProtKB-KW"/>
</dbReference>
<dbReference type="GO" id="GO:0046281">
    <property type="term" value="P:cinnamic acid catabolic process"/>
    <property type="evidence" value="ECO:0000315"/>
    <property type="project" value="SGD"/>
</dbReference>
<dbReference type="GO" id="GO:1901067">
    <property type="term" value="P:ferulate catabolic process"/>
    <property type="evidence" value="ECO:0000269"/>
    <property type="project" value="CACAO"/>
</dbReference>
<dbReference type="GO" id="GO:0033494">
    <property type="term" value="P:ferulate metabolic process"/>
    <property type="evidence" value="ECO:0000314"/>
    <property type="project" value="SGD"/>
</dbReference>
<dbReference type="FunFam" id="3.40.1670.10:FF:000004">
    <property type="entry name" value="Ferulic acid decarboxylase 1"/>
    <property type="match status" value="1"/>
</dbReference>
<dbReference type="Gene3D" id="1.20.5.4570">
    <property type="match status" value="1"/>
</dbReference>
<dbReference type="Gene3D" id="3.40.1670.10">
    <property type="entry name" value="UbiD C-terminal domain-like"/>
    <property type="match status" value="1"/>
</dbReference>
<dbReference type="HAMAP" id="MF_01983">
    <property type="entry name" value="UbiD_FDC"/>
    <property type="match status" value="1"/>
</dbReference>
<dbReference type="InterPro" id="IPR032903">
    <property type="entry name" value="FDC-like"/>
</dbReference>
<dbReference type="InterPro" id="IPR002830">
    <property type="entry name" value="UbiD"/>
</dbReference>
<dbReference type="InterPro" id="IPR049381">
    <property type="entry name" value="UbiD-like_C"/>
</dbReference>
<dbReference type="InterPro" id="IPR049383">
    <property type="entry name" value="UbiD-like_N"/>
</dbReference>
<dbReference type="InterPro" id="IPR048304">
    <property type="entry name" value="UbiD_Rift_dom"/>
</dbReference>
<dbReference type="NCBIfam" id="TIGR00148">
    <property type="entry name" value="UbiD family decarboxylase"/>
    <property type="match status" value="1"/>
</dbReference>
<dbReference type="PANTHER" id="PTHR30108">
    <property type="entry name" value="3-OCTAPRENYL-4-HYDROXYBENZOATE CARBOXY-LYASE-RELATED"/>
    <property type="match status" value="1"/>
</dbReference>
<dbReference type="PANTHER" id="PTHR30108:SF17">
    <property type="entry name" value="FERULIC ACID DECARBOXYLASE 1"/>
    <property type="match status" value="1"/>
</dbReference>
<dbReference type="Pfam" id="PF01977">
    <property type="entry name" value="UbiD"/>
    <property type="match status" value="1"/>
</dbReference>
<dbReference type="Pfam" id="PF20696">
    <property type="entry name" value="UbiD_C"/>
    <property type="match status" value="1"/>
</dbReference>
<dbReference type="Pfam" id="PF20695">
    <property type="entry name" value="UbiD_N"/>
    <property type="match status" value="1"/>
</dbReference>
<dbReference type="SUPFAM" id="SSF50475">
    <property type="entry name" value="FMN-binding split barrel"/>
    <property type="match status" value="1"/>
</dbReference>
<dbReference type="SUPFAM" id="SSF143968">
    <property type="entry name" value="UbiD C-terminal domain-like"/>
    <property type="match status" value="1"/>
</dbReference>
<gene>
    <name evidence="2 9" type="primary">FDC1</name>
    <name evidence="12" type="ordered locus">YDR539W</name>
    <name type="ORF">D3703.2</name>
</gene>
<protein>
    <recommendedName>
        <fullName evidence="2 9">Ferulic acid decarboxylase 1</fullName>
        <ecNumber evidence="2 5 6 7 8">4.1.1.102</ecNumber>
    </recommendedName>
    <alternativeName>
        <fullName evidence="2">Phenacrylate decarboxylase</fullName>
    </alternativeName>
</protein>
<feature type="chain" id="PRO_0000157387" description="Ferulic acid decarboxylase 1">
    <location>
        <begin position="1"/>
        <end position="503"/>
    </location>
</feature>
<feature type="active site" description="Proton donor" evidence="1 2 11">
    <location>
        <position position="285"/>
    </location>
</feature>
<feature type="binding site" evidence="2 8">
    <location>
        <begin position="170"/>
        <end position="175"/>
    </location>
    <ligand>
        <name>prenylated FMN</name>
        <dbReference type="ChEBI" id="CHEBI:87746"/>
    </ligand>
</feature>
<feature type="binding site" evidence="2 8">
    <location>
        <position position="170"/>
    </location>
    <ligand>
        <name>Mn(2+)</name>
        <dbReference type="ChEBI" id="CHEBI:29035"/>
    </ligand>
</feature>
<feature type="binding site" evidence="2 8">
    <location>
        <begin position="192"/>
        <end position="193"/>
    </location>
    <ligand>
        <name>prenylated FMN</name>
        <dbReference type="ChEBI" id="CHEBI:87746"/>
    </ligand>
</feature>
<feature type="binding site" evidence="2 8">
    <location>
        <position position="193"/>
    </location>
    <ligand>
        <name>Mn(2+)</name>
        <dbReference type="ChEBI" id="CHEBI:29035"/>
    </ligand>
</feature>
<feature type="binding site" evidence="2 8">
    <location>
        <position position="236"/>
    </location>
    <ligand>
        <name>Mn(2+)</name>
        <dbReference type="ChEBI" id="CHEBI:29035"/>
    </ligand>
</feature>
<feature type="binding site" evidence="2 8">
    <location>
        <position position="236"/>
    </location>
    <ligand>
        <name>prenylated FMN</name>
        <dbReference type="ChEBI" id="CHEBI:87746"/>
    </ligand>
</feature>
<feature type="binding site" evidence="2 8">
    <location>
        <position position="394"/>
    </location>
    <ligand>
        <name>prenylated FMN</name>
        <dbReference type="ChEBI" id="CHEBI:87746"/>
    </ligand>
</feature>
<feature type="mutagenesis site" description="Abolishes catalytic activity." evidence="7">
    <original>E</original>
    <variation>A</variation>
    <location>
        <position position="285"/>
    </location>
</feature>
<feature type="turn" evidence="13">
    <location>
        <begin position="6"/>
        <end position="8"/>
    </location>
</feature>
<feature type="helix" evidence="13">
    <location>
        <begin position="10"/>
        <end position="19"/>
    </location>
</feature>
<feature type="strand" evidence="13">
    <location>
        <begin position="23"/>
        <end position="26"/>
    </location>
</feature>
<feature type="helix" evidence="13">
    <location>
        <begin position="35"/>
        <end position="45"/>
    </location>
</feature>
<feature type="strand" evidence="13">
    <location>
        <begin position="50"/>
        <end position="53"/>
    </location>
</feature>
<feature type="strand" evidence="13">
    <location>
        <begin position="61"/>
        <end position="68"/>
    </location>
</feature>
<feature type="helix" evidence="13">
    <location>
        <begin position="76"/>
        <end position="78"/>
    </location>
</feature>
<feature type="helix" evidence="13">
    <location>
        <begin position="82"/>
        <end position="87"/>
    </location>
</feature>
<feature type="helix" evidence="13">
    <location>
        <begin position="96"/>
        <end position="106"/>
    </location>
</feature>
<feature type="helix" evidence="13">
    <location>
        <begin position="119"/>
        <end position="121"/>
    </location>
</feature>
<feature type="helix" evidence="13">
    <location>
        <begin position="123"/>
        <end position="125"/>
    </location>
</feature>
<feature type="strand" evidence="13">
    <location>
        <begin position="126"/>
        <end position="129"/>
    </location>
</feature>
<feature type="helix" evidence="13">
    <location>
        <begin position="131"/>
        <end position="133"/>
    </location>
</feature>
<feature type="helix" evidence="13">
    <location>
        <begin position="136"/>
        <end position="138"/>
    </location>
</feature>
<feature type="strand" evidence="13">
    <location>
        <begin position="152"/>
        <end position="156"/>
    </location>
</feature>
<feature type="strand" evidence="13">
    <location>
        <begin position="158"/>
        <end position="162"/>
    </location>
</feature>
<feature type="strand" evidence="13">
    <location>
        <begin position="169"/>
        <end position="172"/>
    </location>
</feature>
<feature type="strand" evidence="13">
    <location>
        <begin position="176"/>
        <end position="178"/>
    </location>
</feature>
<feature type="strand" evidence="13">
    <location>
        <begin position="180"/>
        <end position="186"/>
    </location>
</feature>
<feature type="helix" evidence="13">
    <location>
        <begin position="193"/>
        <end position="202"/>
    </location>
</feature>
<feature type="turn" evidence="13">
    <location>
        <begin position="203"/>
        <end position="205"/>
    </location>
</feature>
<feature type="strand" evidence="13">
    <location>
        <begin position="210"/>
        <end position="217"/>
    </location>
</feature>
<feature type="helix" evidence="13">
    <location>
        <begin position="220"/>
        <end position="226"/>
    </location>
</feature>
<feature type="helix" evidence="13">
    <location>
        <begin position="236"/>
        <end position="244"/>
    </location>
</feature>
<feature type="strand" evidence="13">
    <location>
        <begin position="249"/>
        <end position="252"/>
    </location>
</feature>
<feature type="strand" evidence="13">
    <location>
        <begin position="254"/>
        <end position="257"/>
    </location>
</feature>
<feature type="strand" evidence="13">
    <location>
        <begin position="259"/>
        <end position="261"/>
    </location>
</feature>
<feature type="strand" evidence="13">
    <location>
        <begin position="265"/>
        <end position="280"/>
    </location>
</feature>
<feature type="strand" evidence="13">
    <location>
        <begin position="288"/>
        <end position="291"/>
    </location>
</feature>
<feature type="strand" evidence="13">
    <location>
        <begin position="296"/>
        <end position="308"/>
    </location>
</feature>
<feature type="strand" evidence="13">
    <location>
        <begin position="312"/>
        <end position="316"/>
    </location>
</feature>
<feature type="strand" evidence="13">
    <location>
        <begin position="321"/>
        <end position="324"/>
    </location>
</feature>
<feature type="helix" evidence="13">
    <location>
        <begin position="325"/>
        <end position="328"/>
    </location>
</feature>
<feature type="helix" evidence="13">
    <location>
        <begin position="330"/>
        <end position="345"/>
    </location>
</feature>
<feature type="strand" evidence="13">
    <location>
        <begin position="349"/>
        <end position="353"/>
    </location>
</feature>
<feature type="helix" evidence="13">
    <location>
        <begin position="356"/>
        <end position="358"/>
    </location>
</feature>
<feature type="strand" evidence="13">
    <location>
        <begin position="362"/>
        <end position="367"/>
    </location>
</feature>
<feature type="helix" evidence="13">
    <location>
        <begin position="369"/>
        <end position="374"/>
    </location>
</feature>
<feature type="helix" evidence="13">
    <location>
        <begin position="379"/>
        <end position="390"/>
    </location>
</feature>
<feature type="turn" evidence="13">
    <location>
        <begin position="395"/>
        <end position="398"/>
    </location>
</feature>
<feature type="strand" evidence="13">
    <location>
        <begin position="401"/>
        <end position="406"/>
    </location>
</feature>
<feature type="helix" evidence="13">
    <location>
        <begin position="414"/>
        <end position="424"/>
    </location>
</feature>
<feature type="turn" evidence="13">
    <location>
        <begin position="427"/>
        <end position="430"/>
    </location>
</feature>
<feature type="strand" evidence="13">
    <location>
        <begin position="431"/>
        <end position="434"/>
    </location>
</feature>
<feature type="strand" evidence="13">
    <location>
        <begin position="436"/>
        <end position="438"/>
    </location>
</feature>
<feature type="helix" evidence="13">
    <location>
        <begin position="444"/>
        <end position="447"/>
    </location>
</feature>
<feature type="helix" evidence="13">
    <location>
        <begin position="451"/>
        <end position="454"/>
    </location>
</feature>
<feature type="strand" evidence="13">
    <location>
        <begin position="459"/>
        <end position="465"/>
    </location>
</feature>
<feature type="helix" evidence="13">
    <location>
        <begin position="467"/>
        <end position="470"/>
    </location>
</feature>
<feature type="strand" evidence="14">
    <location>
        <begin position="476"/>
        <end position="478"/>
    </location>
</feature>
<feature type="helix" evidence="13">
    <location>
        <begin position="481"/>
        <end position="484"/>
    </location>
</feature>
<feature type="helix" evidence="13">
    <location>
        <begin position="487"/>
        <end position="500"/>
    </location>
</feature>
<reference key="1">
    <citation type="journal article" date="1997" name="Nature">
        <title>The nucleotide sequence of Saccharomyces cerevisiae chromosome IV.</title>
        <authorList>
            <person name="Jacq C."/>
            <person name="Alt-Moerbe J."/>
            <person name="Andre B."/>
            <person name="Arnold W."/>
            <person name="Bahr A."/>
            <person name="Ballesta J.P.G."/>
            <person name="Bargues M."/>
            <person name="Baron L."/>
            <person name="Becker A."/>
            <person name="Biteau N."/>
            <person name="Bloecker H."/>
            <person name="Blugeon C."/>
            <person name="Boskovic J."/>
            <person name="Brandt P."/>
            <person name="Brueckner M."/>
            <person name="Buitrago M.J."/>
            <person name="Coster F."/>
            <person name="Delaveau T."/>
            <person name="del Rey F."/>
            <person name="Dujon B."/>
            <person name="Eide L.G."/>
            <person name="Garcia-Cantalejo J.M."/>
            <person name="Goffeau A."/>
            <person name="Gomez-Peris A."/>
            <person name="Granotier C."/>
            <person name="Hanemann V."/>
            <person name="Hankeln T."/>
            <person name="Hoheisel J.D."/>
            <person name="Jaeger W."/>
            <person name="Jimenez A."/>
            <person name="Jonniaux J.-L."/>
            <person name="Kraemer C."/>
            <person name="Kuester H."/>
            <person name="Laamanen P."/>
            <person name="Legros Y."/>
            <person name="Louis E.J."/>
            <person name="Moeller-Rieker S."/>
            <person name="Monnet A."/>
            <person name="Moro M."/>
            <person name="Mueller-Auer S."/>
            <person name="Nussbaumer B."/>
            <person name="Paricio N."/>
            <person name="Paulin L."/>
            <person name="Perea J."/>
            <person name="Perez-Alonso M."/>
            <person name="Perez-Ortin J.E."/>
            <person name="Pohl T.M."/>
            <person name="Prydz H."/>
            <person name="Purnelle B."/>
            <person name="Rasmussen S.W."/>
            <person name="Remacha M.A."/>
            <person name="Revuelta J.L."/>
            <person name="Rieger M."/>
            <person name="Salom D."/>
            <person name="Saluz H.P."/>
            <person name="Saiz J.E."/>
            <person name="Saren A.-M."/>
            <person name="Schaefer M."/>
            <person name="Scharfe M."/>
            <person name="Schmidt E.R."/>
            <person name="Schneider C."/>
            <person name="Scholler P."/>
            <person name="Schwarz S."/>
            <person name="Soler-Mira A."/>
            <person name="Urrestarazu L.A."/>
            <person name="Verhasselt P."/>
            <person name="Vissers S."/>
            <person name="Voet M."/>
            <person name="Volckaert G."/>
            <person name="Wagner G."/>
            <person name="Wambutt R."/>
            <person name="Wedler E."/>
            <person name="Wedler H."/>
            <person name="Woelfl S."/>
            <person name="Harris D.E."/>
            <person name="Bowman S."/>
            <person name="Brown D."/>
            <person name="Churcher C.M."/>
            <person name="Connor R."/>
            <person name="Dedman K."/>
            <person name="Gentles S."/>
            <person name="Hamlin N."/>
            <person name="Hunt S."/>
            <person name="Jones L."/>
            <person name="McDonald S."/>
            <person name="Murphy L.D."/>
            <person name="Niblett D."/>
            <person name="Odell C."/>
            <person name="Oliver K."/>
            <person name="Rajandream M.A."/>
            <person name="Richards C."/>
            <person name="Shore L."/>
            <person name="Walsh S.V."/>
            <person name="Barrell B.G."/>
            <person name="Dietrich F.S."/>
            <person name="Mulligan J.T."/>
            <person name="Allen E."/>
            <person name="Araujo R."/>
            <person name="Aviles E."/>
            <person name="Berno A."/>
            <person name="Carpenter J."/>
            <person name="Chen E."/>
            <person name="Cherry J.M."/>
            <person name="Chung E."/>
            <person name="Duncan M."/>
            <person name="Hunicke-Smith S."/>
            <person name="Hyman R.W."/>
            <person name="Komp C."/>
            <person name="Lashkari D."/>
            <person name="Lew H."/>
            <person name="Lin D."/>
            <person name="Mosedale D."/>
            <person name="Nakahara K."/>
            <person name="Namath A."/>
            <person name="Oefner P."/>
            <person name="Oh C."/>
            <person name="Petel F.X."/>
            <person name="Roberts D."/>
            <person name="Schramm S."/>
            <person name="Schroeder M."/>
            <person name="Shogren T."/>
            <person name="Shroff N."/>
            <person name="Winant A."/>
            <person name="Yelton M.A."/>
            <person name="Botstein D."/>
            <person name="Davis R.W."/>
            <person name="Johnston M."/>
            <person name="Andrews S."/>
            <person name="Brinkman R."/>
            <person name="Cooper J."/>
            <person name="Ding H."/>
            <person name="Du Z."/>
            <person name="Favello A."/>
            <person name="Fulton L."/>
            <person name="Gattung S."/>
            <person name="Greco T."/>
            <person name="Hallsworth K."/>
            <person name="Hawkins J."/>
            <person name="Hillier L.W."/>
            <person name="Jier M."/>
            <person name="Johnson D."/>
            <person name="Johnston L."/>
            <person name="Kirsten J."/>
            <person name="Kucaba T."/>
            <person name="Langston Y."/>
            <person name="Latreille P."/>
            <person name="Le T."/>
            <person name="Mardis E."/>
            <person name="Menezes S."/>
            <person name="Miller N."/>
            <person name="Nhan M."/>
            <person name="Pauley A."/>
            <person name="Peluso D."/>
            <person name="Rifkin L."/>
            <person name="Riles L."/>
            <person name="Taich A."/>
            <person name="Trevaskis E."/>
            <person name="Vignati D."/>
            <person name="Wilcox L."/>
            <person name="Wohldman P."/>
            <person name="Vaudin M."/>
            <person name="Wilson R."/>
            <person name="Waterston R."/>
            <person name="Albermann K."/>
            <person name="Hani J."/>
            <person name="Heumann K."/>
            <person name="Kleine K."/>
            <person name="Mewes H.-W."/>
            <person name="Zollner A."/>
            <person name="Zaccaria P."/>
        </authorList>
    </citation>
    <scope>NUCLEOTIDE SEQUENCE [LARGE SCALE GENOMIC DNA]</scope>
    <source>
        <strain>ATCC 204508 / S288c</strain>
    </source>
</reference>
<reference key="2">
    <citation type="journal article" date="2014" name="G3 (Bethesda)">
        <title>The reference genome sequence of Saccharomyces cerevisiae: Then and now.</title>
        <authorList>
            <person name="Engel S.R."/>
            <person name="Dietrich F.S."/>
            <person name="Fisk D.G."/>
            <person name="Binkley G."/>
            <person name="Balakrishnan R."/>
            <person name="Costanzo M.C."/>
            <person name="Dwight S.S."/>
            <person name="Hitz B.C."/>
            <person name="Karra K."/>
            <person name="Nash R.S."/>
            <person name="Weng S."/>
            <person name="Wong E.D."/>
            <person name="Lloyd P."/>
            <person name="Skrzypek M.S."/>
            <person name="Miyasato S.R."/>
            <person name="Simison M."/>
            <person name="Cherry J.M."/>
        </authorList>
    </citation>
    <scope>GENOME REANNOTATION</scope>
    <source>
        <strain>ATCC 204508 / S288c</strain>
    </source>
</reference>
<reference key="3">
    <citation type="journal article" date="2003" name="Nature">
        <title>Global analysis of protein localization in budding yeast.</title>
        <authorList>
            <person name="Huh W.-K."/>
            <person name="Falvo J.V."/>
            <person name="Gerke L.C."/>
            <person name="Carroll A.S."/>
            <person name="Howson R.W."/>
            <person name="Weissman J.S."/>
            <person name="O'Shea E.K."/>
        </authorList>
    </citation>
    <scope>SUBCELLULAR LOCATION [LARGE SCALE ANALYSIS]</scope>
</reference>
<reference key="4">
    <citation type="journal article" date="2003" name="Nature">
        <title>Global analysis of protein expression in yeast.</title>
        <authorList>
            <person name="Ghaemmaghami S."/>
            <person name="Huh W.-K."/>
            <person name="Bower K."/>
            <person name="Howson R.W."/>
            <person name="Belle A."/>
            <person name="Dephoure N."/>
            <person name="O'Shea E.K."/>
            <person name="Weissman J.S."/>
        </authorList>
    </citation>
    <scope>LEVEL OF PROTEIN EXPRESSION [LARGE SCALE ANALYSIS]</scope>
</reference>
<reference key="5">
    <citation type="journal article" date="2010" name="J. Biosci. Bioeng.">
        <title>PAD1 and FDC1 are essential for the decarboxylation of phenylacrylic acids in Saccharomyces cerevisiae.</title>
        <authorList>
            <person name="Mukai N."/>
            <person name="Masaki K."/>
            <person name="Fujii T."/>
            <person name="Kawamukai M."/>
            <person name="Iefuji H."/>
        </authorList>
    </citation>
    <scope>FUNCTION</scope>
</reference>
<reference key="6">
    <citation type="journal article" date="2015" name="ACS Chem. Biol.">
        <title>Isofunctional enzymes PAD1 and UbiX catalyze formation of a novel cofactor required by ferulic acid decarboxylase and 4-hydroxy-3-polyprenylbenzoic acid decarboxylase.</title>
        <authorList>
            <person name="Lin F."/>
            <person name="Ferguson K.L."/>
            <person name="Boyer D.R."/>
            <person name="Lin X.N."/>
            <person name="Marsh E.N."/>
        </authorList>
    </citation>
    <scope>FUNCTION</scope>
    <scope>BIOPHYSICOCHEMICAL PROPERTIES</scope>
    <scope>SUBUNIT</scope>
    <scope>MASS SPECTROMETRY</scope>
</reference>
<reference key="7">
    <citation type="journal article" date="2015" name="Appl. Environ. Microbiol.">
        <title>Structure and mechanism of ferulic acid decarboxylase (FDC1) from Saccharomyces cerevisiae.</title>
        <authorList>
            <person name="Bhuiya M.W."/>
            <person name="Lee S.G."/>
            <person name="Jez J.M."/>
            <person name="Yu O."/>
        </authorList>
    </citation>
    <scope>X-RAY CRYSTALLOGRAPHY (2.35 ANGSTROMS)</scope>
    <scope>SUBUNIT</scope>
    <scope>MUTAGENESIS OF GLU-285</scope>
    <scope>ACTIVE SITE</scope>
    <scope>BIOPHYSICOCHEMICAL PROPERTIES</scope>
</reference>
<reference key="8">
    <citation type="journal article" date="2015" name="Nature">
        <title>New cofactor supports alpha,beta-unsaturated acid decarboxylation via 1,3-dipolar cycloaddition.</title>
        <authorList>
            <person name="Payne K.A."/>
            <person name="White M.D."/>
            <person name="Fisher K."/>
            <person name="Khara B."/>
            <person name="Bailey S.S."/>
            <person name="Parker D."/>
            <person name="Rattray N.J."/>
            <person name="Trivedi D.K."/>
            <person name="Goodacre R."/>
            <person name="Beveridge R."/>
            <person name="Barran P."/>
            <person name="Rigby S.E."/>
            <person name="Scrutton N.S."/>
            <person name="Hay S."/>
            <person name="Leys D."/>
        </authorList>
    </citation>
    <scope>X-RAY CRYSTALLOGRAPHY (1.65 ANGSTROMS) IN COMPLEX WITH PRFMN AND MANGANESE</scope>
</reference>
<organism>
    <name type="scientific">Saccharomyces cerevisiae (strain ATCC 204508 / S288c)</name>
    <name type="common">Baker's yeast</name>
    <dbReference type="NCBI Taxonomy" id="559292"/>
    <lineage>
        <taxon>Eukaryota</taxon>
        <taxon>Fungi</taxon>
        <taxon>Dikarya</taxon>
        <taxon>Ascomycota</taxon>
        <taxon>Saccharomycotina</taxon>
        <taxon>Saccharomycetes</taxon>
        <taxon>Saccharomycetales</taxon>
        <taxon>Saccharomycetaceae</taxon>
        <taxon>Saccharomyces</taxon>
    </lineage>
</organism>
<evidence type="ECO:0000250" key="1">
    <source>
        <dbReference type="UniProtKB" id="A2QHE5"/>
    </source>
</evidence>
<evidence type="ECO:0000255" key="2">
    <source>
        <dbReference type="HAMAP-Rule" id="MF_03196"/>
    </source>
</evidence>
<evidence type="ECO:0000269" key="3">
    <source>
    </source>
</evidence>
<evidence type="ECO:0000269" key="4">
    <source>
    </source>
</evidence>
<evidence type="ECO:0000269" key="5">
    <source>
    </source>
</evidence>
<evidence type="ECO:0000269" key="6">
    <source>
    </source>
</evidence>
<evidence type="ECO:0000269" key="7">
    <source>
    </source>
</evidence>
<evidence type="ECO:0000269" key="8">
    <source>
    </source>
</evidence>
<evidence type="ECO:0000303" key="9">
    <source>
    </source>
</evidence>
<evidence type="ECO:0000305" key="10"/>
<evidence type="ECO:0000305" key="11">
    <source>
    </source>
</evidence>
<evidence type="ECO:0000312" key="12">
    <source>
        <dbReference type="SGD" id="S000002947"/>
    </source>
</evidence>
<evidence type="ECO:0007829" key="13">
    <source>
        <dbReference type="PDB" id="4ZAC"/>
    </source>
</evidence>
<evidence type="ECO:0007829" key="14">
    <source>
        <dbReference type="PDB" id="6EVF"/>
    </source>
</evidence>